<sequence>MQKLIILLLVAAVLMSTQALFQEKRRKEKIDLLSKRKTDAEKQHKRLCPDYTDPCSNAYECCSWNCHNGHCTG</sequence>
<keyword id="KW-0165">Cleavage on pair of basic residues</keyword>
<keyword id="KW-1015">Disulfide bond</keyword>
<keyword id="KW-0872">Ion channel impairing toxin</keyword>
<keyword id="KW-0960">Knottin</keyword>
<keyword id="KW-0964">Secreted</keyword>
<keyword id="KW-0732">Signal</keyword>
<keyword id="KW-0800">Toxin</keyword>
<reference key="1">
    <citation type="journal article" date="2011" name="J. Biol. Chem.">
        <title>Embryonic toxin expression in the cone snail Conus victoriae: primed to kill or divergent function?</title>
        <authorList>
            <person name="Safavi-Hemami H."/>
            <person name="Siero W.A."/>
            <person name="Kuang Z."/>
            <person name="Williamson N.A."/>
            <person name="Karas J.A."/>
            <person name="Page L.R."/>
            <person name="Macmillan D."/>
            <person name="Callaghan B."/>
            <person name="Kompella S.N."/>
            <person name="Adams D.J."/>
            <person name="Norton R.S."/>
            <person name="Purcell A.W."/>
        </authorList>
    </citation>
    <scope>NUCLEOTIDE SEQUENCE [MRNA]</scope>
    <scope>DEVELOPMENTAL STAGE</scope>
    <source>
        <tissue>Embryo</tissue>
        <tissue>Venom duct</tissue>
    </source>
</reference>
<evidence type="ECO:0000250" key="1"/>
<evidence type="ECO:0000255" key="2"/>
<evidence type="ECO:0000269" key="3">
    <source>
    </source>
</evidence>
<evidence type="ECO:0000305" key="4"/>
<feature type="signal peptide" evidence="2">
    <location>
        <begin position="1"/>
        <end position="19"/>
    </location>
</feature>
<feature type="propeptide" id="PRO_0000425183" evidence="1">
    <location>
        <begin position="20"/>
        <end position="44"/>
    </location>
</feature>
<feature type="peptide" id="PRO_0000425184" description="Conotoxin Vc6.17">
    <location>
        <begin position="47"/>
        <end position="73"/>
    </location>
</feature>
<feature type="disulfide bond" evidence="1">
    <location>
        <begin position="48"/>
        <end position="62"/>
    </location>
</feature>
<feature type="disulfide bond" evidence="1">
    <location>
        <begin position="55"/>
        <end position="66"/>
    </location>
</feature>
<feature type="disulfide bond" evidence="1">
    <location>
        <begin position="61"/>
        <end position="71"/>
    </location>
</feature>
<protein>
    <recommendedName>
        <fullName>Conotoxin Vc6.17</fullName>
    </recommendedName>
</protein>
<proteinExistence type="evidence at transcript level"/>
<name>O26H_CONVC</name>
<organism>
    <name type="scientific">Conus victoriae</name>
    <name type="common">Queen Victoria cone</name>
    <dbReference type="NCBI Taxonomy" id="319920"/>
    <lineage>
        <taxon>Eukaryota</taxon>
        <taxon>Metazoa</taxon>
        <taxon>Spiralia</taxon>
        <taxon>Lophotrochozoa</taxon>
        <taxon>Mollusca</taxon>
        <taxon>Gastropoda</taxon>
        <taxon>Caenogastropoda</taxon>
        <taxon>Neogastropoda</taxon>
        <taxon>Conoidea</taxon>
        <taxon>Conidae</taxon>
        <taxon>Conus</taxon>
        <taxon>Cylinder</taxon>
    </lineage>
</organism>
<accession>G1AS83</accession>
<comment type="function">
    <text evidence="1">Inhibits voltage-gated ion channels.</text>
</comment>
<comment type="subcellular location">
    <subcellularLocation>
        <location evidence="1">Secreted</location>
    </subcellularLocation>
</comment>
<comment type="tissue specificity">
    <text>Expressed by the venom duct.</text>
</comment>
<comment type="developmental stage">
    <text evidence="3">Only expressed in embryos.</text>
</comment>
<comment type="domain">
    <text evidence="1">The presence of a 'disulfide through disulfide knot' structurally defines this protein as a knottin.</text>
</comment>
<comment type="domain">
    <text>The cysteine framework is VI/VII (C-C-CC-C-C).</text>
</comment>
<comment type="similarity">
    <text evidence="4">Belongs to the conotoxin O2 superfamily.</text>
</comment>
<dbReference type="EMBL" id="JF433910">
    <property type="protein sequence ID" value="AEA35366.1"/>
    <property type="molecule type" value="mRNA"/>
</dbReference>
<dbReference type="SMR" id="G1AS83"/>
<dbReference type="ConoServer" id="4278">
    <property type="toxin name" value="Vc6.17 precursor"/>
</dbReference>
<dbReference type="GO" id="GO:0005576">
    <property type="term" value="C:extracellular region"/>
    <property type="evidence" value="ECO:0007669"/>
    <property type="project" value="UniProtKB-SubCell"/>
</dbReference>
<dbReference type="GO" id="GO:0008200">
    <property type="term" value="F:ion channel inhibitor activity"/>
    <property type="evidence" value="ECO:0007669"/>
    <property type="project" value="InterPro"/>
</dbReference>
<dbReference type="GO" id="GO:0090729">
    <property type="term" value="F:toxin activity"/>
    <property type="evidence" value="ECO:0007669"/>
    <property type="project" value="UniProtKB-KW"/>
</dbReference>
<dbReference type="InterPro" id="IPR004214">
    <property type="entry name" value="Conotoxin"/>
</dbReference>
<dbReference type="Pfam" id="PF02950">
    <property type="entry name" value="Conotoxin"/>
    <property type="match status" value="1"/>
</dbReference>